<sequence>MTVIVPIHGPAPAPAPVPERVGVLLVNLGTPDSCDTKGVRVYLREFLSDPRVIENQGLFWKLALNGIILNTRPARKAKDYQKIWNHEKNESPLKTITRAQAEKLAASLTDRSHLVVDWAMRYGNPSLRSRIEALVARGCSRLLVVPLYPQYSAATSATVCDQAFRVLRELRAQPTLRVTPPYYRDDAYIDALANSINAHLATLSFEPEMIVASFHGMPQAYIEKGDPYQSQCVATVDALRERMGLDEKKLLLTFQSRFGFDQWLQPYTDKTIEKLAKDGVRKLAVVMPGFASDCLETLEEIAQENAEIFMHNGGEEFSAIPCLNDSDDGIAVIRQLVMRELQGWL</sequence>
<gene>
    <name evidence="1" type="primary">hemH</name>
    <name type="ordered locus">RPD_0861</name>
</gene>
<protein>
    <recommendedName>
        <fullName evidence="1">Ferrochelatase</fullName>
        <ecNumber evidence="1">4.98.1.1</ecNumber>
    </recommendedName>
    <alternativeName>
        <fullName evidence="1">Heme synthase</fullName>
    </alternativeName>
    <alternativeName>
        <fullName evidence="1">Protoheme ferro-lyase</fullName>
    </alternativeName>
</protein>
<accession>Q13CU0</accession>
<feature type="chain" id="PRO_1000019362" description="Ferrochelatase">
    <location>
        <begin position="1"/>
        <end position="345"/>
    </location>
</feature>
<feature type="binding site" evidence="1">
    <location>
        <position position="215"/>
    </location>
    <ligand>
        <name>Fe cation</name>
        <dbReference type="ChEBI" id="CHEBI:24875"/>
    </ligand>
</feature>
<feature type="binding site" evidence="1">
    <location>
        <position position="296"/>
    </location>
    <ligand>
        <name>Fe cation</name>
        <dbReference type="ChEBI" id="CHEBI:24875"/>
    </ligand>
</feature>
<name>HEMH_RHOPS</name>
<reference key="1">
    <citation type="submission" date="2006-03" db="EMBL/GenBank/DDBJ databases">
        <title>Complete sequence of Rhodopseudomonas palustris BisB5.</title>
        <authorList>
            <consortium name="US DOE Joint Genome Institute"/>
            <person name="Copeland A."/>
            <person name="Lucas S."/>
            <person name="Lapidus A."/>
            <person name="Barry K."/>
            <person name="Detter J.C."/>
            <person name="Glavina del Rio T."/>
            <person name="Hammon N."/>
            <person name="Israni S."/>
            <person name="Dalin E."/>
            <person name="Tice H."/>
            <person name="Pitluck S."/>
            <person name="Chain P."/>
            <person name="Malfatti S."/>
            <person name="Shin M."/>
            <person name="Vergez L."/>
            <person name="Schmutz J."/>
            <person name="Larimer F."/>
            <person name="Land M."/>
            <person name="Hauser L."/>
            <person name="Pelletier D.A."/>
            <person name="Kyrpides N."/>
            <person name="Lykidis A."/>
            <person name="Oda Y."/>
            <person name="Harwood C.S."/>
            <person name="Richardson P."/>
        </authorList>
    </citation>
    <scope>NUCLEOTIDE SEQUENCE [LARGE SCALE GENOMIC DNA]</scope>
    <source>
        <strain>BisB5</strain>
    </source>
</reference>
<comment type="function">
    <text evidence="1">Catalyzes the ferrous insertion into protoporphyrin IX.</text>
</comment>
<comment type="catalytic activity">
    <reaction evidence="1">
        <text>heme b + 2 H(+) = protoporphyrin IX + Fe(2+)</text>
        <dbReference type="Rhea" id="RHEA:22584"/>
        <dbReference type="ChEBI" id="CHEBI:15378"/>
        <dbReference type="ChEBI" id="CHEBI:29033"/>
        <dbReference type="ChEBI" id="CHEBI:57306"/>
        <dbReference type="ChEBI" id="CHEBI:60344"/>
        <dbReference type="EC" id="4.98.1.1"/>
    </reaction>
</comment>
<comment type="pathway">
    <text evidence="1">Porphyrin-containing compound metabolism; protoheme biosynthesis; protoheme from protoporphyrin-IX: step 1/1.</text>
</comment>
<comment type="subcellular location">
    <subcellularLocation>
        <location evidence="1">Cytoplasm</location>
    </subcellularLocation>
</comment>
<comment type="similarity">
    <text evidence="1">Belongs to the ferrochelatase family.</text>
</comment>
<proteinExistence type="inferred from homology"/>
<organism>
    <name type="scientific">Rhodopseudomonas palustris (strain BisB5)</name>
    <dbReference type="NCBI Taxonomy" id="316057"/>
    <lineage>
        <taxon>Bacteria</taxon>
        <taxon>Pseudomonadati</taxon>
        <taxon>Pseudomonadota</taxon>
        <taxon>Alphaproteobacteria</taxon>
        <taxon>Hyphomicrobiales</taxon>
        <taxon>Nitrobacteraceae</taxon>
        <taxon>Rhodopseudomonas</taxon>
    </lineage>
</organism>
<evidence type="ECO:0000255" key="1">
    <source>
        <dbReference type="HAMAP-Rule" id="MF_00323"/>
    </source>
</evidence>
<keyword id="KW-0963">Cytoplasm</keyword>
<keyword id="KW-0350">Heme biosynthesis</keyword>
<keyword id="KW-0408">Iron</keyword>
<keyword id="KW-0456">Lyase</keyword>
<keyword id="KW-0479">Metal-binding</keyword>
<keyword id="KW-0627">Porphyrin biosynthesis</keyword>
<dbReference type="EC" id="4.98.1.1" evidence="1"/>
<dbReference type="EMBL" id="CP000283">
    <property type="protein sequence ID" value="ABE38099.1"/>
    <property type="molecule type" value="Genomic_DNA"/>
</dbReference>
<dbReference type="SMR" id="Q13CU0"/>
<dbReference type="STRING" id="316057.RPD_0861"/>
<dbReference type="KEGG" id="rpd:RPD_0861"/>
<dbReference type="eggNOG" id="COG0276">
    <property type="taxonomic scope" value="Bacteria"/>
</dbReference>
<dbReference type="HOGENOM" id="CLU_018884_0_0_5"/>
<dbReference type="BioCyc" id="RPAL316057:RPD_RS04380-MONOMER"/>
<dbReference type="UniPathway" id="UPA00252">
    <property type="reaction ID" value="UER00325"/>
</dbReference>
<dbReference type="Proteomes" id="UP000001818">
    <property type="component" value="Chromosome"/>
</dbReference>
<dbReference type="GO" id="GO:0005737">
    <property type="term" value="C:cytoplasm"/>
    <property type="evidence" value="ECO:0007669"/>
    <property type="project" value="UniProtKB-SubCell"/>
</dbReference>
<dbReference type="GO" id="GO:0004325">
    <property type="term" value="F:ferrochelatase activity"/>
    <property type="evidence" value="ECO:0007669"/>
    <property type="project" value="UniProtKB-UniRule"/>
</dbReference>
<dbReference type="GO" id="GO:0046872">
    <property type="term" value="F:metal ion binding"/>
    <property type="evidence" value="ECO:0007669"/>
    <property type="project" value="UniProtKB-KW"/>
</dbReference>
<dbReference type="GO" id="GO:0006783">
    <property type="term" value="P:heme biosynthetic process"/>
    <property type="evidence" value="ECO:0007669"/>
    <property type="project" value="UniProtKB-UniRule"/>
</dbReference>
<dbReference type="CDD" id="cd00419">
    <property type="entry name" value="Ferrochelatase_C"/>
    <property type="match status" value="1"/>
</dbReference>
<dbReference type="CDD" id="cd03411">
    <property type="entry name" value="Ferrochelatase_N"/>
    <property type="match status" value="1"/>
</dbReference>
<dbReference type="FunFam" id="3.40.50.1400:FF:000002">
    <property type="entry name" value="Ferrochelatase"/>
    <property type="match status" value="1"/>
</dbReference>
<dbReference type="Gene3D" id="3.40.50.1400">
    <property type="match status" value="2"/>
</dbReference>
<dbReference type="HAMAP" id="MF_00323">
    <property type="entry name" value="Ferrochelatase"/>
    <property type="match status" value="1"/>
</dbReference>
<dbReference type="InterPro" id="IPR001015">
    <property type="entry name" value="Ferrochelatase"/>
</dbReference>
<dbReference type="InterPro" id="IPR019772">
    <property type="entry name" value="Ferrochelatase_AS"/>
</dbReference>
<dbReference type="InterPro" id="IPR033644">
    <property type="entry name" value="Ferrochelatase_C"/>
</dbReference>
<dbReference type="InterPro" id="IPR033659">
    <property type="entry name" value="Ferrochelatase_N"/>
</dbReference>
<dbReference type="NCBIfam" id="TIGR00109">
    <property type="entry name" value="hemH"/>
    <property type="match status" value="1"/>
</dbReference>
<dbReference type="PANTHER" id="PTHR11108">
    <property type="entry name" value="FERROCHELATASE"/>
    <property type="match status" value="1"/>
</dbReference>
<dbReference type="PANTHER" id="PTHR11108:SF1">
    <property type="entry name" value="FERROCHELATASE, MITOCHONDRIAL"/>
    <property type="match status" value="1"/>
</dbReference>
<dbReference type="Pfam" id="PF00762">
    <property type="entry name" value="Ferrochelatase"/>
    <property type="match status" value="1"/>
</dbReference>
<dbReference type="SUPFAM" id="SSF53800">
    <property type="entry name" value="Chelatase"/>
    <property type="match status" value="1"/>
</dbReference>
<dbReference type="PROSITE" id="PS00534">
    <property type="entry name" value="FERROCHELATASE"/>
    <property type="match status" value="1"/>
</dbReference>